<evidence type="ECO:0000255" key="1">
    <source>
        <dbReference type="HAMAP-Rule" id="MF_00175"/>
    </source>
</evidence>
<evidence type="ECO:0000255" key="2">
    <source>
        <dbReference type="PROSITE-ProRule" id="PRU01250"/>
    </source>
</evidence>
<sequence length="417" mass="45976">MAKKIDNKALSCSFCCKNQNEVKKLIAGFSGFICDECIELCIHLIEEERKSNLAISNYSKLPPKKIYEAINAHVVGQQQAAKILAVAVYIQCIRFEHRELADLVAKSNVLLIGPTGCGKTLIAQTLAKIINVPFAMADATSLTEAGYVGEDVENIILRLLQAADFNVERAQKGIIYIDEIDKIARKSENPSITRDVSGEGVQQALLKIMEGTIALVPPQGGRKHPQQDFIQIDTTNMLFICGGAFTGIEKIIEARTSQSTIGFEATVKSKHDQDYNQILNNLEADDLTKFGLIPEFLGRLPVIATLSDLNQQSLVDILTKPKNALVKQYQKLFELDGAELIFEEEALIAIAQKALAKKTGARGLRAILECVLLDTMFELSNLKNMQVIITADIVKNNLKPIIKPKLQKKSVKKKVTA</sequence>
<feature type="chain" id="PRO_1000024604" description="ATP-dependent Clp protease ATP-binding subunit ClpX">
    <location>
        <begin position="1"/>
        <end position="417"/>
    </location>
</feature>
<feature type="domain" description="ClpX-type ZB" evidence="2">
    <location>
        <begin position="1"/>
        <end position="53"/>
    </location>
</feature>
<feature type="binding site" evidence="2">
    <location>
        <position position="12"/>
    </location>
    <ligand>
        <name>Zn(2+)</name>
        <dbReference type="ChEBI" id="CHEBI:29105"/>
    </ligand>
</feature>
<feature type="binding site" evidence="2">
    <location>
        <position position="15"/>
    </location>
    <ligand>
        <name>Zn(2+)</name>
        <dbReference type="ChEBI" id="CHEBI:29105"/>
    </ligand>
</feature>
<feature type="binding site" evidence="2">
    <location>
        <position position="34"/>
    </location>
    <ligand>
        <name>Zn(2+)</name>
        <dbReference type="ChEBI" id="CHEBI:29105"/>
    </ligand>
</feature>
<feature type="binding site" evidence="2">
    <location>
        <position position="37"/>
    </location>
    <ligand>
        <name>Zn(2+)</name>
        <dbReference type="ChEBI" id="CHEBI:29105"/>
    </ligand>
</feature>
<feature type="binding site" evidence="1">
    <location>
        <begin position="114"/>
        <end position="121"/>
    </location>
    <ligand>
        <name>ATP</name>
        <dbReference type="ChEBI" id="CHEBI:30616"/>
    </ligand>
</feature>
<protein>
    <recommendedName>
        <fullName evidence="1">ATP-dependent Clp protease ATP-binding subunit ClpX</fullName>
    </recommendedName>
</protein>
<organism>
    <name type="scientific">Orientia tsutsugamushi (strain Boryong)</name>
    <name type="common">Rickettsia tsutsugamushi</name>
    <dbReference type="NCBI Taxonomy" id="357244"/>
    <lineage>
        <taxon>Bacteria</taxon>
        <taxon>Pseudomonadati</taxon>
        <taxon>Pseudomonadota</taxon>
        <taxon>Alphaproteobacteria</taxon>
        <taxon>Rickettsiales</taxon>
        <taxon>Rickettsiaceae</taxon>
        <taxon>Rickettsieae</taxon>
        <taxon>Orientia</taxon>
    </lineage>
</organism>
<gene>
    <name evidence="1" type="primary">clpX</name>
    <name type="ordered locus">OTBS_0948</name>
</gene>
<dbReference type="EMBL" id="AM494475">
    <property type="protein sequence ID" value="CAM80014.1"/>
    <property type="molecule type" value="Genomic_DNA"/>
</dbReference>
<dbReference type="RefSeq" id="WP_011944715.1">
    <property type="nucleotide sequence ID" value="NC_009488.1"/>
</dbReference>
<dbReference type="SMR" id="A5CDP2"/>
<dbReference type="KEGG" id="ots:OTBS_0948"/>
<dbReference type="eggNOG" id="COG1219">
    <property type="taxonomic scope" value="Bacteria"/>
</dbReference>
<dbReference type="HOGENOM" id="CLU_014218_8_2_5"/>
<dbReference type="Proteomes" id="UP000001565">
    <property type="component" value="Chromosome"/>
</dbReference>
<dbReference type="GO" id="GO:0009376">
    <property type="term" value="C:HslUV protease complex"/>
    <property type="evidence" value="ECO:0007669"/>
    <property type="project" value="TreeGrafter"/>
</dbReference>
<dbReference type="GO" id="GO:0005524">
    <property type="term" value="F:ATP binding"/>
    <property type="evidence" value="ECO:0007669"/>
    <property type="project" value="UniProtKB-UniRule"/>
</dbReference>
<dbReference type="GO" id="GO:0016887">
    <property type="term" value="F:ATP hydrolysis activity"/>
    <property type="evidence" value="ECO:0007669"/>
    <property type="project" value="InterPro"/>
</dbReference>
<dbReference type="GO" id="GO:0140662">
    <property type="term" value="F:ATP-dependent protein folding chaperone"/>
    <property type="evidence" value="ECO:0007669"/>
    <property type="project" value="InterPro"/>
</dbReference>
<dbReference type="GO" id="GO:0046983">
    <property type="term" value="F:protein dimerization activity"/>
    <property type="evidence" value="ECO:0007669"/>
    <property type="project" value="InterPro"/>
</dbReference>
<dbReference type="GO" id="GO:0051082">
    <property type="term" value="F:unfolded protein binding"/>
    <property type="evidence" value="ECO:0007669"/>
    <property type="project" value="UniProtKB-UniRule"/>
</dbReference>
<dbReference type="GO" id="GO:0008270">
    <property type="term" value="F:zinc ion binding"/>
    <property type="evidence" value="ECO:0007669"/>
    <property type="project" value="InterPro"/>
</dbReference>
<dbReference type="GO" id="GO:0051301">
    <property type="term" value="P:cell division"/>
    <property type="evidence" value="ECO:0007669"/>
    <property type="project" value="TreeGrafter"/>
</dbReference>
<dbReference type="GO" id="GO:0051603">
    <property type="term" value="P:proteolysis involved in protein catabolic process"/>
    <property type="evidence" value="ECO:0007669"/>
    <property type="project" value="TreeGrafter"/>
</dbReference>
<dbReference type="CDD" id="cd19497">
    <property type="entry name" value="RecA-like_ClpX"/>
    <property type="match status" value="1"/>
</dbReference>
<dbReference type="FunFam" id="1.10.8.60:FF:000002">
    <property type="entry name" value="ATP-dependent Clp protease ATP-binding subunit ClpX"/>
    <property type="match status" value="1"/>
</dbReference>
<dbReference type="FunFam" id="3.40.50.300:FF:000005">
    <property type="entry name" value="ATP-dependent Clp protease ATP-binding subunit ClpX"/>
    <property type="match status" value="1"/>
</dbReference>
<dbReference type="Gene3D" id="1.10.8.60">
    <property type="match status" value="1"/>
</dbReference>
<dbReference type="Gene3D" id="6.20.220.10">
    <property type="entry name" value="ClpX chaperone, C4-type zinc finger domain"/>
    <property type="match status" value="1"/>
</dbReference>
<dbReference type="Gene3D" id="3.40.50.300">
    <property type="entry name" value="P-loop containing nucleotide triphosphate hydrolases"/>
    <property type="match status" value="1"/>
</dbReference>
<dbReference type="HAMAP" id="MF_00175">
    <property type="entry name" value="ClpX"/>
    <property type="match status" value="1"/>
</dbReference>
<dbReference type="InterPro" id="IPR003593">
    <property type="entry name" value="AAA+_ATPase"/>
</dbReference>
<dbReference type="InterPro" id="IPR050052">
    <property type="entry name" value="ATP-dep_Clp_protease_ClpX"/>
</dbReference>
<dbReference type="InterPro" id="IPR003959">
    <property type="entry name" value="ATPase_AAA_core"/>
</dbReference>
<dbReference type="InterPro" id="IPR019489">
    <property type="entry name" value="Clp_ATPase_C"/>
</dbReference>
<dbReference type="InterPro" id="IPR004487">
    <property type="entry name" value="Clp_protease_ATP-bd_su_ClpX"/>
</dbReference>
<dbReference type="InterPro" id="IPR046425">
    <property type="entry name" value="ClpX_bact"/>
</dbReference>
<dbReference type="InterPro" id="IPR027417">
    <property type="entry name" value="P-loop_NTPase"/>
</dbReference>
<dbReference type="InterPro" id="IPR010603">
    <property type="entry name" value="Znf_CppX_C4"/>
</dbReference>
<dbReference type="InterPro" id="IPR038366">
    <property type="entry name" value="Znf_CppX_C4_sf"/>
</dbReference>
<dbReference type="NCBIfam" id="TIGR00382">
    <property type="entry name" value="clpX"/>
    <property type="match status" value="1"/>
</dbReference>
<dbReference type="NCBIfam" id="NF003745">
    <property type="entry name" value="PRK05342.1"/>
    <property type="match status" value="1"/>
</dbReference>
<dbReference type="PANTHER" id="PTHR48102:SF7">
    <property type="entry name" value="ATP-DEPENDENT CLP PROTEASE ATP-BINDING SUBUNIT CLPX-LIKE, MITOCHONDRIAL"/>
    <property type="match status" value="1"/>
</dbReference>
<dbReference type="PANTHER" id="PTHR48102">
    <property type="entry name" value="ATP-DEPENDENT CLP PROTEASE ATP-BINDING SUBUNIT CLPX-LIKE, MITOCHONDRIAL-RELATED"/>
    <property type="match status" value="1"/>
</dbReference>
<dbReference type="Pfam" id="PF07724">
    <property type="entry name" value="AAA_2"/>
    <property type="match status" value="1"/>
</dbReference>
<dbReference type="Pfam" id="PF10431">
    <property type="entry name" value="ClpB_D2-small"/>
    <property type="match status" value="1"/>
</dbReference>
<dbReference type="Pfam" id="PF06689">
    <property type="entry name" value="zf-C4_ClpX"/>
    <property type="match status" value="1"/>
</dbReference>
<dbReference type="SMART" id="SM00382">
    <property type="entry name" value="AAA"/>
    <property type="match status" value="1"/>
</dbReference>
<dbReference type="SMART" id="SM01086">
    <property type="entry name" value="ClpB_D2-small"/>
    <property type="match status" value="1"/>
</dbReference>
<dbReference type="SMART" id="SM00994">
    <property type="entry name" value="zf-C4_ClpX"/>
    <property type="match status" value="1"/>
</dbReference>
<dbReference type="SUPFAM" id="SSF57716">
    <property type="entry name" value="Glucocorticoid receptor-like (DNA-binding domain)"/>
    <property type="match status" value="1"/>
</dbReference>
<dbReference type="SUPFAM" id="SSF52540">
    <property type="entry name" value="P-loop containing nucleoside triphosphate hydrolases"/>
    <property type="match status" value="1"/>
</dbReference>
<dbReference type="PROSITE" id="PS51902">
    <property type="entry name" value="CLPX_ZB"/>
    <property type="match status" value="1"/>
</dbReference>
<proteinExistence type="inferred from homology"/>
<keyword id="KW-0067">ATP-binding</keyword>
<keyword id="KW-0143">Chaperone</keyword>
<keyword id="KW-0479">Metal-binding</keyword>
<keyword id="KW-0547">Nucleotide-binding</keyword>
<keyword id="KW-1185">Reference proteome</keyword>
<keyword id="KW-0862">Zinc</keyword>
<reference key="1">
    <citation type="journal article" date="2007" name="Proc. Natl. Acad. Sci. U.S.A.">
        <title>The Orientia tsutsugamushi genome reveals massive proliferation of conjugative type IV secretion system and host-cell interaction genes.</title>
        <authorList>
            <person name="Cho N.-H."/>
            <person name="Kim H.-R."/>
            <person name="Lee J.-H."/>
            <person name="Kim S.-Y."/>
            <person name="Kim J."/>
            <person name="Cha S."/>
            <person name="Kim S.-Y."/>
            <person name="Darby A.C."/>
            <person name="Fuxelius H.-H."/>
            <person name="Yin J."/>
            <person name="Kim J.H."/>
            <person name="Kim J."/>
            <person name="Lee S.J."/>
            <person name="Koh Y.-S."/>
            <person name="Jang W.-J."/>
            <person name="Park K.-H."/>
            <person name="Andersson S.G.E."/>
            <person name="Choi M.-S."/>
            <person name="Kim I.-S."/>
        </authorList>
    </citation>
    <scope>NUCLEOTIDE SEQUENCE [LARGE SCALE GENOMIC DNA]</scope>
    <source>
        <strain>Boryong</strain>
    </source>
</reference>
<name>CLPX_ORITB</name>
<comment type="function">
    <text evidence="1">ATP-dependent specificity component of the Clp protease. It directs the protease to specific substrates. Can perform chaperone functions in the absence of ClpP.</text>
</comment>
<comment type="subunit">
    <text evidence="1">Component of the ClpX-ClpP complex. Forms a hexameric ring that, in the presence of ATP, binds to fourteen ClpP subunits assembled into a disk-like structure with a central cavity, resembling the structure of eukaryotic proteasomes.</text>
</comment>
<comment type="similarity">
    <text evidence="1">Belongs to the ClpX chaperone family.</text>
</comment>
<accession>A5CDP2</accession>